<sequence>MAKDDVIEVDGKVVDTMPNAMFTVELENGHQVLATISGKIRKNYIRILPGDKVQVELSPYDLTRGRITYRFK</sequence>
<organism>
    <name type="scientific">Lactococcus lactis subsp. cremoris (strain SK11)</name>
    <dbReference type="NCBI Taxonomy" id="272622"/>
    <lineage>
        <taxon>Bacteria</taxon>
        <taxon>Bacillati</taxon>
        <taxon>Bacillota</taxon>
        <taxon>Bacilli</taxon>
        <taxon>Lactobacillales</taxon>
        <taxon>Streptococcaceae</taxon>
        <taxon>Lactococcus</taxon>
        <taxon>Lactococcus cremoris subsp. cremoris</taxon>
    </lineage>
</organism>
<accession>Q02W47</accession>
<evidence type="ECO:0000255" key="1">
    <source>
        <dbReference type="HAMAP-Rule" id="MF_00075"/>
    </source>
</evidence>
<gene>
    <name evidence="1" type="primary">infA</name>
    <name type="ordered locus">LACR_2379</name>
</gene>
<name>IF1_LACLS</name>
<proteinExistence type="inferred from homology"/>
<keyword id="KW-0963">Cytoplasm</keyword>
<keyword id="KW-0396">Initiation factor</keyword>
<keyword id="KW-0648">Protein biosynthesis</keyword>
<keyword id="KW-0694">RNA-binding</keyword>
<keyword id="KW-0699">rRNA-binding</keyword>
<reference key="1">
    <citation type="journal article" date="2006" name="Proc. Natl. Acad. Sci. U.S.A.">
        <title>Comparative genomics of the lactic acid bacteria.</title>
        <authorList>
            <person name="Makarova K.S."/>
            <person name="Slesarev A."/>
            <person name="Wolf Y.I."/>
            <person name="Sorokin A."/>
            <person name="Mirkin B."/>
            <person name="Koonin E.V."/>
            <person name="Pavlov A."/>
            <person name="Pavlova N."/>
            <person name="Karamychev V."/>
            <person name="Polouchine N."/>
            <person name="Shakhova V."/>
            <person name="Grigoriev I."/>
            <person name="Lou Y."/>
            <person name="Rohksar D."/>
            <person name="Lucas S."/>
            <person name="Huang K."/>
            <person name="Goodstein D.M."/>
            <person name="Hawkins T."/>
            <person name="Plengvidhya V."/>
            <person name="Welker D."/>
            <person name="Hughes J."/>
            <person name="Goh Y."/>
            <person name="Benson A."/>
            <person name="Baldwin K."/>
            <person name="Lee J.-H."/>
            <person name="Diaz-Muniz I."/>
            <person name="Dosti B."/>
            <person name="Smeianov V."/>
            <person name="Wechter W."/>
            <person name="Barabote R."/>
            <person name="Lorca G."/>
            <person name="Altermann E."/>
            <person name="Barrangou R."/>
            <person name="Ganesan B."/>
            <person name="Xie Y."/>
            <person name="Rawsthorne H."/>
            <person name="Tamir D."/>
            <person name="Parker C."/>
            <person name="Breidt F."/>
            <person name="Broadbent J.R."/>
            <person name="Hutkins R."/>
            <person name="O'Sullivan D."/>
            <person name="Steele J."/>
            <person name="Unlu G."/>
            <person name="Saier M.H. Jr."/>
            <person name="Klaenhammer T."/>
            <person name="Richardson P."/>
            <person name="Kozyavkin S."/>
            <person name="Weimer B.C."/>
            <person name="Mills D.A."/>
        </authorList>
    </citation>
    <scope>NUCLEOTIDE SEQUENCE [LARGE SCALE GENOMIC DNA]</scope>
    <source>
        <strain>SK11</strain>
    </source>
</reference>
<protein>
    <recommendedName>
        <fullName evidence="1">Translation initiation factor IF-1</fullName>
    </recommendedName>
</protein>
<feature type="chain" id="PRO_0000338850" description="Translation initiation factor IF-1">
    <location>
        <begin position="1"/>
        <end position="72"/>
    </location>
</feature>
<feature type="domain" description="S1-like" evidence="1">
    <location>
        <begin position="1"/>
        <end position="72"/>
    </location>
</feature>
<comment type="function">
    <text evidence="1">One of the essential components for the initiation of protein synthesis. Stabilizes the binding of IF-2 and IF-3 on the 30S subunit to which N-formylmethionyl-tRNA(fMet) subsequently binds. Helps modulate mRNA selection, yielding the 30S pre-initiation complex (PIC). Upon addition of the 50S ribosomal subunit IF-1, IF-2 and IF-3 are released leaving the mature 70S translation initiation complex.</text>
</comment>
<comment type="subunit">
    <text evidence="1">Component of the 30S ribosomal translation pre-initiation complex which assembles on the 30S ribosome in the order IF-2 and IF-3, IF-1 and N-formylmethionyl-tRNA(fMet); mRNA recruitment can occur at any time during PIC assembly.</text>
</comment>
<comment type="subcellular location">
    <subcellularLocation>
        <location evidence="1">Cytoplasm</location>
    </subcellularLocation>
</comment>
<comment type="similarity">
    <text evidence="1">Belongs to the IF-1 family.</text>
</comment>
<dbReference type="EMBL" id="CP000425">
    <property type="protein sequence ID" value="ABJ73825.1"/>
    <property type="molecule type" value="Genomic_DNA"/>
</dbReference>
<dbReference type="RefSeq" id="WP_003130554.1">
    <property type="nucleotide sequence ID" value="NC_008527.1"/>
</dbReference>
<dbReference type="SMR" id="Q02W47"/>
<dbReference type="GeneID" id="89634424"/>
<dbReference type="KEGG" id="llc:LACR_2379"/>
<dbReference type="HOGENOM" id="CLU_151267_1_0_9"/>
<dbReference type="Proteomes" id="UP000000240">
    <property type="component" value="Chromosome"/>
</dbReference>
<dbReference type="GO" id="GO:0005829">
    <property type="term" value="C:cytosol"/>
    <property type="evidence" value="ECO:0007669"/>
    <property type="project" value="TreeGrafter"/>
</dbReference>
<dbReference type="GO" id="GO:0043022">
    <property type="term" value="F:ribosome binding"/>
    <property type="evidence" value="ECO:0007669"/>
    <property type="project" value="UniProtKB-UniRule"/>
</dbReference>
<dbReference type="GO" id="GO:0019843">
    <property type="term" value="F:rRNA binding"/>
    <property type="evidence" value="ECO:0007669"/>
    <property type="project" value="UniProtKB-UniRule"/>
</dbReference>
<dbReference type="GO" id="GO:0003743">
    <property type="term" value="F:translation initiation factor activity"/>
    <property type="evidence" value="ECO:0007669"/>
    <property type="project" value="UniProtKB-UniRule"/>
</dbReference>
<dbReference type="CDD" id="cd04451">
    <property type="entry name" value="S1_IF1"/>
    <property type="match status" value="1"/>
</dbReference>
<dbReference type="FunFam" id="2.40.50.140:FF:000002">
    <property type="entry name" value="Translation initiation factor IF-1"/>
    <property type="match status" value="1"/>
</dbReference>
<dbReference type="Gene3D" id="2.40.50.140">
    <property type="entry name" value="Nucleic acid-binding proteins"/>
    <property type="match status" value="1"/>
</dbReference>
<dbReference type="HAMAP" id="MF_00075">
    <property type="entry name" value="IF_1"/>
    <property type="match status" value="1"/>
</dbReference>
<dbReference type="InterPro" id="IPR012340">
    <property type="entry name" value="NA-bd_OB-fold"/>
</dbReference>
<dbReference type="InterPro" id="IPR006196">
    <property type="entry name" value="RNA-binding_domain_S1_IF1"/>
</dbReference>
<dbReference type="InterPro" id="IPR003029">
    <property type="entry name" value="S1_domain"/>
</dbReference>
<dbReference type="InterPro" id="IPR004368">
    <property type="entry name" value="TIF_IF1"/>
</dbReference>
<dbReference type="NCBIfam" id="TIGR00008">
    <property type="entry name" value="infA"/>
    <property type="match status" value="1"/>
</dbReference>
<dbReference type="PANTHER" id="PTHR33370">
    <property type="entry name" value="TRANSLATION INITIATION FACTOR IF-1, CHLOROPLASTIC"/>
    <property type="match status" value="1"/>
</dbReference>
<dbReference type="PANTHER" id="PTHR33370:SF1">
    <property type="entry name" value="TRANSLATION INITIATION FACTOR IF-1, CHLOROPLASTIC"/>
    <property type="match status" value="1"/>
</dbReference>
<dbReference type="Pfam" id="PF01176">
    <property type="entry name" value="eIF-1a"/>
    <property type="match status" value="1"/>
</dbReference>
<dbReference type="SMART" id="SM00316">
    <property type="entry name" value="S1"/>
    <property type="match status" value="1"/>
</dbReference>
<dbReference type="SUPFAM" id="SSF50249">
    <property type="entry name" value="Nucleic acid-binding proteins"/>
    <property type="match status" value="1"/>
</dbReference>
<dbReference type="PROSITE" id="PS50832">
    <property type="entry name" value="S1_IF1_TYPE"/>
    <property type="match status" value="1"/>
</dbReference>